<accession>P28601</accession>
<feature type="chain" id="PRO_0000129182" description="Large ribosomal subunit protein uL4">
    <location>
        <begin position="1"/>
        <end position="207"/>
    </location>
</feature>
<feature type="region of interest" description="Disordered" evidence="2">
    <location>
        <begin position="44"/>
        <end position="78"/>
    </location>
</feature>
<name>RL4_GEOSE</name>
<gene>
    <name type="primary">rplD</name>
</gene>
<proteinExistence type="evidence at protein level"/>
<evidence type="ECO:0000250" key="1"/>
<evidence type="ECO:0000256" key="2">
    <source>
        <dbReference type="SAM" id="MobiDB-lite"/>
    </source>
</evidence>
<evidence type="ECO:0000305" key="3"/>
<sequence>MPKVALYNQNGQTVGEIELNDAVFGIEPNKHVLFEAVIMQRASMRQGTHKTKNRAEVSGGGRKPWRQKGTGRARQGSIRAPQWRGGGTVFGPVPRSYSYKLPKKVRRLAIKSALSSKVLENDIVVLDQLSLEAPKTKEMVKILNNLSVDRKALIVTDELNENVYLSARNIPGVKVVPANGINVLDVLNHDKLVITKAAVEKVEEVLA</sequence>
<dbReference type="EMBL" id="X67014">
    <property type="protein sequence ID" value="CAA47403.1"/>
    <property type="molecule type" value="Genomic_DNA"/>
</dbReference>
<dbReference type="PIR" id="S24364">
    <property type="entry name" value="S24364"/>
</dbReference>
<dbReference type="RefSeq" id="WP_033008661.1">
    <property type="nucleotide sequence ID" value="NZ_RCTK01000011.1"/>
</dbReference>
<dbReference type="SMR" id="P28601"/>
<dbReference type="GeneID" id="89612899"/>
<dbReference type="OrthoDB" id="9803201at2"/>
<dbReference type="GO" id="GO:1990904">
    <property type="term" value="C:ribonucleoprotein complex"/>
    <property type="evidence" value="ECO:0007669"/>
    <property type="project" value="UniProtKB-KW"/>
</dbReference>
<dbReference type="GO" id="GO:0005840">
    <property type="term" value="C:ribosome"/>
    <property type="evidence" value="ECO:0007669"/>
    <property type="project" value="UniProtKB-KW"/>
</dbReference>
<dbReference type="GO" id="GO:0019843">
    <property type="term" value="F:rRNA binding"/>
    <property type="evidence" value="ECO:0007669"/>
    <property type="project" value="UniProtKB-UniRule"/>
</dbReference>
<dbReference type="GO" id="GO:0003735">
    <property type="term" value="F:structural constituent of ribosome"/>
    <property type="evidence" value="ECO:0007669"/>
    <property type="project" value="InterPro"/>
</dbReference>
<dbReference type="GO" id="GO:0046677">
    <property type="term" value="P:response to antibiotic"/>
    <property type="evidence" value="ECO:0007669"/>
    <property type="project" value="UniProtKB-KW"/>
</dbReference>
<dbReference type="GO" id="GO:0006412">
    <property type="term" value="P:translation"/>
    <property type="evidence" value="ECO:0007669"/>
    <property type="project" value="UniProtKB-UniRule"/>
</dbReference>
<dbReference type="FunFam" id="3.40.1370.10:FF:000003">
    <property type="entry name" value="50S ribosomal protein L4"/>
    <property type="match status" value="1"/>
</dbReference>
<dbReference type="Gene3D" id="3.40.1370.10">
    <property type="match status" value="1"/>
</dbReference>
<dbReference type="HAMAP" id="MF_01328_B">
    <property type="entry name" value="Ribosomal_uL4_B"/>
    <property type="match status" value="1"/>
</dbReference>
<dbReference type="InterPro" id="IPR002136">
    <property type="entry name" value="Ribosomal_uL4"/>
</dbReference>
<dbReference type="InterPro" id="IPR013005">
    <property type="entry name" value="Ribosomal_uL4-like"/>
</dbReference>
<dbReference type="InterPro" id="IPR023574">
    <property type="entry name" value="Ribosomal_uL4_dom_sf"/>
</dbReference>
<dbReference type="NCBIfam" id="TIGR03953">
    <property type="entry name" value="rplD_bact"/>
    <property type="match status" value="1"/>
</dbReference>
<dbReference type="PANTHER" id="PTHR10746">
    <property type="entry name" value="50S RIBOSOMAL PROTEIN L4"/>
    <property type="match status" value="1"/>
</dbReference>
<dbReference type="PANTHER" id="PTHR10746:SF6">
    <property type="entry name" value="LARGE RIBOSOMAL SUBUNIT PROTEIN UL4M"/>
    <property type="match status" value="1"/>
</dbReference>
<dbReference type="Pfam" id="PF00573">
    <property type="entry name" value="Ribosomal_L4"/>
    <property type="match status" value="1"/>
</dbReference>
<dbReference type="SUPFAM" id="SSF52166">
    <property type="entry name" value="Ribosomal protein L4"/>
    <property type="match status" value="1"/>
</dbReference>
<protein>
    <recommendedName>
        <fullName evidence="3">Large ribosomal subunit protein uL4</fullName>
    </recommendedName>
    <alternativeName>
        <fullName>50S ribosomal protein L4</fullName>
        <shortName>BL4</shortName>
    </alternativeName>
</protein>
<keyword id="KW-0046">Antibiotic resistance</keyword>
<keyword id="KW-0903">Direct protein sequencing</keyword>
<keyword id="KW-0687">Ribonucleoprotein</keyword>
<keyword id="KW-0689">Ribosomal protein</keyword>
<keyword id="KW-0694">RNA-binding</keyword>
<keyword id="KW-0699">rRNA-binding</keyword>
<reference key="1">
    <citation type="journal article" date="1992" name="Eur. J. Biochem.">
        <title>Primary structures of ribosomal proteins L3 and L4 from Bacillus stearothermophilus.</title>
        <authorList>
            <person name="Herwig S."/>
            <person name="Kruft V."/>
            <person name="Wittmann-Liebold B."/>
        </authorList>
    </citation>
    <scope>NUCLEOTIDE SEQUENCE [GENOMIC DNA]</scope>
    <scope>PARTIAL PROTEIN SEQUENCE</scope>
    <source>
        <strain>799</strain>
    </source>
</reference>
<reference key="2">
    <citation type="journal article" date="1995" name="EMBO J.">
        <title>Protein-rRNA binding features and their structural and functional implications in ribosomes as determined by cross-linking studies.</title>
        <authorList>
            <person name="Urlaub H."/>
            <person name="Kruft V."/>
            <person name="Bischof O."/>
            <person name="Mueller E.-C."/>
            <person name="Wittmann-Liebold B."/>
        </authorList>
    </citation>
    <scope>PROTEIN SEQUENCE OF 53-64 AND 66-75</scope>
    <scope>CROSS-LINKING TO RRNA</scope>
    <source>
        <strain>799</strain>
    </source>
</reference>
<reference key="3">
    <citation type="journal article" date="1990" name="J. Bacteriol.">
        <title>Isolation and characterization of Bacillus stearothermophilus 30S and 50S ribosomal protein mutations.</title>
        <authorList>
            <person name="Schnier J."/>
            <person name="Gewitz H.S."/>
            <person name="Behrens S.E."/>
            <person name="Lee A."/>
            <person name="Ginther C."/>
            <person name="Leighton T."/>
        </authorList>
    </citation>
    <scope>ISOLATION OF ANTIBIOTIC RESISTANT STRAINS</scope>
    <source>
        <strain>799</strain>
    </source>
</reference>
<reference key="4">
    <citation type="journal article" date="1995" name="Biochem. Cell Biol.">
        <title>Regulation of the Escherichia coli S10 ribosomal protein operon by heterologous L4 ribosomal proteins.</title>
        <authorList>
            <person name="Zengel J.M."/>
            <person name="Vorozheikina D."/>
            <person name="Li X."/>
            <person name="Lindahl L."/>
        </authorList>
    </citation>
    <scope>ABILITY TO REPRESS THE E.COLI S10 OPERON</scope>
</reference>
<comment type="function">
    <text evidence="1">One of the primary rRNA binding proteins, this protein initially binds near the 5'-end of the 23S rRNA. It is important during the early stages of 50S assembly. It makes multiple contacts with different domains of the 23S rRNA in the assembled 50S subunit and ribosome (By similarity).</text>
</comment>
<comment type="function">
    <text>This protein when expressed in E.coli represses the endogenous S10 operon; this may not occur in B.stearothermophilus however.</text>
</comment>
<comment type="function">
    <text evidence="1">Forms part of the polypeptide exit tunnel.</text>
</comment>
<comment type="subunit">
    <text>Part of the 50S ribosomal subunit.</text>
</comment>
<comment type="miscellaneous">
    <text>Erythromycin, niddamycin, oleandomycin and spiramycin-resistant strains have changes in this protein as seen by gel electrophoresis; the nature of these changes has not been determined.</text>
</comment>
<comment type="similarity">
    <text evidence="3">Belongs to the universal ribosomal protein uL4 family.</text>
</comment>
<organism>
    <name type="scientific">Geobacillus stearothermophilus</name>
    <name type="common">Bacillus stearothermophilus</name>
    <dbReference type="NCBI Taxonomy" id="1422"/>
    <lineage>
        <taxon>Bacteria</taxon>
        <taxon>Bacillati</taxon>
        <taxon>Bacillota</taxon>
        <taxon>Bacilli</taxon>
        <taxon>Bacillales</taxon>
        <taxon>Anoxybacillaceae</taxon>
        <taxon>Geobacillus</taxon>
    </lineage>
</organism>